<sequence>MYLSPEQVALVGQVFESFVLEHHQKEIAQILTEKYEDAHYSLVVNAMTLFEANMEIGEYFNAFPNEVLPIFDNALRRAAMSFLQSCSEKQTLVMKQNFHARITGLPVCPELTREHIPRTRDVGHFLSVTGTVIRTSLVKVLEYEQDFMCNKCKHVVTVKADFEQYYTFKPPITCSNEEGCNSSKFTCLSDSSTPASCRDYQEIKIQEQVQRLSVGSIPRSMIVVLEDDLVDSCKSGDDVTVYGVVMQRWKPLYIDTRCDLEIVLKANYIAVNNEQPCGVVINEEVRKEYEGFWEKYRNSPLEGRNEILASLCPQVFGMFVVKLAVAMVLAGGVQRIDSAGTRVRGESHLLLVGDPGTGKSQFLKYAVKITPRSVLTAGIGSTSAGLTVTAVKDSGEWNLEAGALVLADGGLCCIDEFNSIKEHDRTSIHEAMEQQTISVAKAGLVCKLNTRTTILAATNPKGQYDPEESISVNVALASPLLSRFDLVLVLLDTKNEDWDRIISSFILESKGCPRKSDKLWSMEKMKTYFCLIKNLQPKMSQDANVILVRYYQLQRQSSCRNAARTTIRLLESLIRLAEAHARLMYRDVVTTEDAITVVSIMESSMQGGALLGGVNALHTSFPENPREQYRMQCELLLERLGLQKLLDKELQRLDRQQNEDSLESDHGESASNISCNLVGHKVHSDSAMEETCSTNETFSSPDATRKTIPDILDMTKSDDTISKGTITPAEQNRAIRTQSKSSSKHNTQSLAGGHLSENHLTRCSDKSLGWFDSLQSVQMSPISKLGEGCTAEKLQPAVLPVLAEGSCHPDKEVVDLVGNKSEVLQKSGSSPVGTERHLSNRIVTEHVSKKWQNLNKNSLCGKTGSNMTSLQSENSGSHTVCSSGPLHSTPGAPWKRKKIIAQVEKETKAELLDPDTQARLVQLARFSFKQHSKLVHLPGGKTDIASIAQNHEDQPDQKLTPSDRLNKLDRILNNVDKASNSVKGLKQQDTLAQENPPKQTVLAQQSNSISNAATACVHEKKLNEGSDSRKVSSSTLAKLARFSFSPPPENKALEASKETLISSRAAAPSSKRKCFQLEPSSDKTTMSSKFLFSTDLDDDELDVDWEVEIKRNKRTAT</sequence>
<name>MCM9_XENTR</name>
<accession>F6RIX4</accession>
<dbReference type="EC" id="3.6.4.12"/>
<dbReference type="EMBL" id="AAMC01008549">
    <property type="status" value="NOT_ANNOTATED_CDS"/>
    <property type="molecule type" value="Genomic_DNA"/>
</dbReference>
<dbReference type="SMR" id="F6RIX4"/>
<dbReference type="FunCoup" id="F6RIX4">
    <property type="interactions" value="1421"/>
</dbReference>
<dbReference type="STRING" id="8364.ENSXETP00000027282"/>
<dbReference type="PaxDb" id="8364-ENSXETP00000028127"/>
<dbReference type="eggNOG" id="KOG0477">
    <property type="taxonomic scope" value="Eukaryota"/>
</dbReference>
<dbReference type="HOGENOM" id="CLU_000995_7_2_1"/>
<dbReference type="InParanoid" id="F6RIX4"/>
<dbReference type="TreeFam" id="TF329421"/>
<dbReference type="Proteomes" id="UP000008143">
    <property type="component" value="Unplaced"/>
</dbReference>
<dbReference type="GO" id="GO:0097362">
    <property type="term" value="C:MCM8-MCM9 complex"/>
    <property type="evidence" value="ECO:0000250"/>
    <property type="project" value="UniProtKB"/>
</dbReference>
<dbReference type="GO" id="GO:0005634">
    <property type="term" value="C:nucleus"/>
    <property type="evidence" value="ECO:0007669"/>
    <property type="project" value="UniProtKB-SubCell"/>
</dbReference>
<dbReference type="GO" id="GO:0005524">
    <property type="term" value="F:ATP binding"/>
    <property type="evidence" value="ECO:0007669"/>
    <property type="project" value="UniProtKB-KW"/>
</dbReference>
<dbReference type="GO" id="GO:0016887">
    <property type="term" value="F:ATP hydrolysis activity"/>
    <property type="evidence" value="ECO:0007669"/>
    <property type="project" value="InterPro"/>
</dbReference>
<dbReference type="GO" id="GO:0003677">
    <property type="term" value="F:DNA binding"/>
    <property type="evidence" value="ECO:0007669"/>
    <property type="project" value="UniProtKB-KW"/>
</dbReference>
<dbReference type="GO" id="GO:0004386">
    <property type="term" value="F:helicase activity"/>
    <property type="evidence" value="ECO:0007669"/>
    <property type="project" value="UniProtKB-KW"/>
</dbReference>
<dbReference type="GO" id="GO:0006974">
    <property type="term" value="P:DNA damage response"/>
    <property type="evidence" value="ECO:0000250"/>
    <property type="project" value="UniProtKB"/>
</dbReference>
<dbReference type="GO" id="GO:0006260">
    <property type="term" value="P:DNA replication"/>
    <property type="evidence" value="ECO:0007669"/>
    <property type="project" value="UniProtKB-KW"/>
</dbReference>
<dbReference type="GO" id="GO:0000724">
    <property type="term" value="P:double-strand break repair via homologous recombination"/>
    <property type="evidence" value="ECO:0000250"/>
    <property type="project" value="UniProtKB"/>
</dbReference>
<dbReference type="GO" id="GO:0030174">
    <property type="term" value="P:regulation of DNA-templated DNA replication initiation"/>
    <property type="evidence" value="ECO:0007669"/>
    <property type="project" value="UniProtKB-ARBA"/>
</dbReference>
<dbReference type="CDD" id="cd17760">
    <property type="entry name" value="MCM9"/>
    <property type="match status" value="1"/>
</dbReference>
<dbReference type="FunFam" id="3.40.50.300:FF:000671">
    <property type="entry name" value="DNA helicase MCM9 isoform X1"/>
    <property type="match status" value="1"/>
</dbReference>
<dbReference type="FunFam" id="2.20.28.10:FF:000019">
    <property type="entry name" value="Dna replication licensing factor mcm9 mini-chromosome maintenance deficient 9 hmcm9 mini-chromosome maintenance deficient domain-containing protein"/>
    <property type="match status" value="1"/>
</dbReference>
<dbReference type="FunFam" id="2.40.50.140:FF:000120">
    <property type="entry name" value="Probable DNA helicase MCM9"/>
    <property type="match status" value="1"/>
</dbReference>
<dbReference type="Gene3D" id="2.20.28.10">
    <property type="match status" value="1"/>
</dbReference>
<dbReference type="Gene3D" id="2.40.50.140">
    <property type="entry name" value="Nucleic acid-binding proteins"/>
    <property type="match status" value="1"/>
</dbReference>
<dbReference type="Gene3D" id="3.40.50.300">
    <property type="entry name" value="P-loop containing nucleotide triphosphate hydrolases"/>
    <property type="match status" value="1"/>
</dbReference>
<dbReference type="InterPro" id="IPR003593">
    <property type="entry name" value="AAA+_ATPase"/>
</dbReference>
<dbReference type="InterPro" id="IPR031327">
    <property type="entry name" value="MCM"/>
</dbReference>
<dbReference type="InterPro" id="IPR001208">
    <property type="entry name" value="MCM_dom"/>
</dbReference>
<dbReference type="InterPro" id="IPR041562">
    <property type="entry name" value="MCM_lid"/>
</dbReference>
<dbReference type="InterPro" id="IPR033762">
    <property type="entry name" value="MCM_OB"/>
</dbReference>
<dbReference type="InterPro" id="IPR012340">
    <property type="entry name" value="NA-bd_OB-fold"/>
</dbReference>
<dbReference type="InterPro" id="IPR027417">
    <property type="entry name" value="P-loop_NTPase"/>
</dbReference>
<dbReference type="PANTHER" id="PTHR11630:SF48">
    <property type="entry name" value="DNA HELICASE MCM9"/>
    <property type="match status" value="1"/>
</dbReference>
<dbReference type="PANTHER" id="PTHR11630">
    <property type="entry name" value="DNA REPLICATION LICENSING FACTOR MCM FAMILY MEMBER"/>
    <property type="match status" value="1"/>
</dbReference>
<dbReference type="Pfam" id="PF00493">
    <property type="entry name" value="MCM"/>
    <property type="match status" value="1"/>
</dbReference>
<dbReference type="Pfam" id="PF17855">
    <property type="entry name" value="MCM_lid"/>
    <property type="match status" value="1"/>
</dbReference>
<dbReference type="Pfam" id="PF17207">
    <property type="entry name" value="MCM_OB"/>
    <property type="match status" value="1"/>
</dbReference>
<dbReference type="PRINTS" id="PR01657">
    <property type="entry name" value="MCMFAMILY"/>
</dbReference>
<dbReference type="SMART" id="SM00382">
    <property type="entry name" value="AAA"/>
    <property type="match status" value="1"/>
</dbReference>
<dbReference type="SMART" id="SM00350">
    <property type="entry name" value="MCM"/>
    <property type="match status" value="1"/>
</dbReference>
<dbReference type="SUPFAM" id="SSF50249">
    <property type="entry name" value="Nucleic acid-binding proteins"/>
    <property type="match status" value="1"/>
</dbReference>
<dbReference type="SUPFAM" id="SSF52540">
    <property type="entry name" value="P-loop containing nucleoside triphosphate hydrolases"/>
    <property type="match status" value="1"/>
</dbReference>
<dbReference type="PROSITE" id="PS50051">
    <property type="entry name" value="MCM_2"/>
    <property type="match status" value="1"/>
</dbReference>
<feature type="chain" id="PRO_0000419479" description="DNA helicase MCM9">
    <location>
        <begin position="1"/>
        <end position="1117"/>
    </location>
</feature>
<feature type="domain" description="MCM">
    <location>
        <begin position="301"/>
        <end position="506"/>
    </location>
</feature>
<feature type="region of interest" description="Disordered" evidence="3">
    <location>
        <begin position="686"/>
        <end position="756"/>
    </location>
</feature>
<feature type="region of interest" description="Disordered" evidence="3">
    <location>
        <begin position="868"/>
        <end position="893"/>
    </location>
</feature>
<feature type="compositionally biased region" description="Polar residues" evidence="3">
    <location>
        <begin position="691"/>
        <end position="702"/>
    </location>
</feature>
<feature type="compositionally biased region" description="Basic and acidic residues" evidence="3">
    <location>
        <begin position="703"/>
        <end position="721"/>
    </location>
</feature>
<feature type="compositionally biased region" description="Polar residues" evidence="3">
    <location>
        <begin position="722"/>
        <end position="750"/>
    </location>
</feature>
<feature type="compositionally biased region" description="Polar residues" evidence="3">
    <location>
        <begin position="868"/>
        <end position="886"/>
    </location>
</feature>
<feature type="binding site" evidence="2">
    <location>
        <begin position="353"/>
        <end position="360"/>
    </location>
    <ligand>
        <name>ATP</name>
        <dbReference type="ChEBI" id="CHEBI:30616"/>
    </ligand>
</feature>
<proteinExistence type="inferred from homology"/>
<keyword id="KW-0067">ATP-binding</keyword>
<keyword id="KW-0227">DNA damage</keyword>
<keyword id="KW-0234">DNA repair</keyword>
<keyword id="KW-0235">DNA replication</keyword>
<keyword id="KW-0238">DNA-binding</keyword>
<keyword id="KW-0347">Helicase</keyword>
<keyword id="KW-0378">Hydrolase</keyword>
<keyword id="KW-0547">Nucleotide-binding</keyword>
<keyword id="KW-0539">Nucleus</keyword>
<keyword id="KW-1185">Reference proteome</keyword>
<organism>
    <name type="scientific">Xenopus tropicalis</name>
    <name type="common">Western clawed frog</name>
    <name type="synonym">Silurana tropicalis</name>
    <dbReference type="NCBI Taxonomy" id="8364"/>
    <lineage>
        <taxon>Eukaryota</taxon>
        <taxon>Metazoa</taxon>
        <taxon>Chordata</taxon>
        <taxon>Craniata</taxon>
        <taxon>Vertebrata</taxon>
        <taxon>Euteleostomi</taxon>
        <taxon>Amphibia</taxon>
        <taxon>Batrachia</taxon>
        <taxon>Anura</taxon>
        <taxon>Pipoidea</taxon>
        <taxon>Pipidae</taxon>
        <taxon>Xenopodinae</taxon>
        <taxon>Xenopus</taxon>
        <taxon>Silurana</taxon>
    </lineage>
</organism>
<reference key="1">
    <citation type="journal article" date="2010" name="Science">
        <title>The genome of the Western clawed frog Xenopus tropicalis.</title>
        <authorList>
            <person name="Hellsten U."/>
            <person name="Harland R.M."/>
            <person name="Gilchrist M.J."/>
            <person name="Hendrix D."/>
            <person name="Jurka J."/>
            <person name="Kapitonov V."/>
            <person name="Ovcharenko I."/>
            <person name="Putnam N.H."/>
            <person name="Shu S."/>
            <person name="Taher L."/>
            <person name="Blitz I.L."/>
            <person name="Blumberg B."/>
            <person name="Dichmann D.S."/>
            <person name="Dubchak I."/>
            <person name="Amaya E."/>
            <person name="Detter J.C."/>
            <person name="Fletcher R."/>
            <person name="Gerhard D.S."/>
            <person name="Goodstein D."/>
            <person name="Graves T."/>
            <person name="Grigoriev I.V."/>
            <person name="Grimwood J."/>
            <person name="Kawashima T."/>
            <person name="Lindquist E."/>
            <person name="Lucas S.M."/>
            <person name="Mead P.E."/>
            <person name="Mitros T."/>
            <person name="Ogino H."/>
            <person name="Ohta Y."/>
            <person name="Poliakov A.V."/>
            <person name="Pollet N."/>
            <person name="Robert J."/>
            <person name="Salamov A."/>
            <person name="Sater A.K."/>
            <person name="Schmutz J."/>
            <person name="Terry A."/>
            <person name="Vize P.D."/>
            <person name="Warren W.C."/>
            <person name="Wells D."/>
            <person name="Wills A."/>
            <person name="Wilson R.K."/>
            <person name="Zimmerman L.B."/>
            <person name="Zorn A.M."/>
            <person name="Grainger R."/>
            <person name="Grammer T."/>
            <person name="Khokha M.K."/>
            <person name="Richardson P.M."/>
            <person name="Rokhsar D.S."/>
        </authorList>
    </citation>
    <scope>NUCLEOTIDE SEQUENCE [LARGE SCALE GENOMIC DNA]</scope>
</reference>
<comment type="function">
    <text evidence="1">Component of the MCM8-MCM9 complex, a complex involved in homologous recombination repair following DNA interstrand cross-links and plays a key role during gametogenesis. The MCM8-MCM9 complex probably acts as a hexameric helicase required to process aberrant forks into homologous recombination substrates and to orchestrate homologous recombination with resection, fork stabilization and fork restart. In eggs, required for MCM2-7 loading onto chromatin during DNA replication. Probably not required for DNA replication in other cells (By similarity).</text>
</comment>
<comment type="catalytic activity">
    <reaction>
        <text>ATP + H2O = ADP + phosphate + H(+)</text>
        <dbReference type="Rhea" id="RHEA:13065"/>
        <dbReference type="ChEBI" id="CHEBI:15377"/>
        <dbReference type="ChEBI" id="CHEBI:15378"/>
        <dbReference type="ChEBI" id="CHEBI:30616"/>
        <dbReference type="ChEBI" id="CHEBI:43474"/>
        <dbReference type="ChEBI" id="CHEBI:456216"/>
        <dbReference type="EC" id="3.6.4.12"/>
    </reaction>
</comment>
<comment type="subunit">
    <text evidence="1">Component of the MCM8-MCM9 complex, which forms a hexamer composed of mcm8 and mcm9. Interacts with cdt1 (By similarity).</text>
</comment>
<comment type="subcellular location">
    <subcellularLocation>
        <location evidence="1">Nucleus</location>
    </subcellularLocation>
    <text evidence="1">Localizes to nuclear foci and colocalizes with rad51.</text>
</comment>
<comment type="similarity">
    <text evidence="4">Belongs to the MCM family.</text>
</comment>
<evidence type="ECO:0000250" key="1"/>
<evidence type="ECO:0000255" key="2"/>
<evidence type="ECO:0000256" key="3">
    <source>
        <dbReference type="SAM" id="MobiDB-lite"/>
    </source>
</evidence>
<evidence type="ECO:0000305" key="4"/>
<gene>
    <name type="primary">mcm9</name>
</gene>
<protein>
    <recommendedName>
        <fullName>DNA helicase MCM9</fullName>
        <ecNumber>3.6.4.12</ecNumber>
    </recommendedName>
    <alternativeName>
        <fullName>Minichromosome maintenance 9</fullName>
    </alternativeName>
</protein>